<reference key="1">
    <citation type="journal article" date="2006" name="J. Bacteriol.">
        <title>Pathogenomic sequence analysis of Bacillus cereus and Bacillus thuringiensis isolates closely related to Bacillus anthracis.</title>
        <authorList>
            <person name="Han C.S."/>
            <person name="Xie G."/>
            <person name="Challacombe J.F."/>
            <person name="Altherr M.R."/>
            <person name="Bhotika S.S."/>
            <person name="Bruce D."/>
            <person name="Campbell C.S."/>
            <person name="Campbell M.L."/>
            <person name="Chen J."/>
            <person name="Chertkov O."/>
            <person name="Cleland C."/>
            <person name="Dimitrijevic M."/>
            <person name="Doggett N.A."/>
            <person name="Fawcett J.J."/>
            <person name="Glavina T."/>
            <person name="Goodwin L.A."/>
            <person name="Hill K.K."/>
            <person name="Hitchcock P."/>
            <person name="Jackson P.J."/>
            <person name="Keim P."/>
            <person name="Kewalramani A.R."/>
            <person name="Longmire J."/>
            <person name="Lucas S."/>
            <person name="Malfatti S."/>
            <person name="McMurry K."/>
            <person name="Meincke L.J."/>
            <person name="Misra M."/>
            <person name="Moseman B.L."/>
            <person name="Mundt M."/>
            <person name="Munk A.C."/>
            <person name="Okinaka R.T."/>
            <person name="Parson-Quintana B."/>
            <person name="Reilly L.P."/>
            <person name="Richardson P."/>
            <person name="Robinson D.L."/>
            <person name="Rubin E."/>
            <person name="Saunders E."/>
            <person name="Tapia R."/>
            <person name="Tesmer J.G."/>
            <person name="Thayer N."/>
            <person name="Thompson L.S."/>
            <person name="Tice H."/>
            <person name="Ticknor L.O."/>
            <person name="Wills P.L."/>
            <person name="Brettin T.S."/>
            <person name="Gilna P."/>
        </authorList>
    </citation>
    <scope>NUCLEOTIDE SEQUENCE [LARGE SCALE GENOMIC DNA]</scope>
    <source>
        <strain>ZK / E33L</strain>
    </source>
</reference>
<feature type="chain" id="PRO_1000066956" description="Glucosamine-6-phosphate deaminase">
    <location>
        <begin position="1"/>
        <end position="262"/>
    </location>
</feature>
<feature type="active site" description="Proton acceptor; for enolization step" evidence="1">
    <location>
        <position position="63"/>
    </location>
</feature>
<feature type="active site" description="For ring-opening step" evidence="1">
    <location>
        <position position="129"/>
    </location>
</feature>
<feature type="active site" description="Proton acceptor; for ring-opening step" evidence="1">
    <location>
        <position position="131"/>
    </location>
</feature>
<feature type="active site" description="For ring-opening step" evidence="1">
    <location>
        <position position="136"/>
    </location>
</feature>
<sequence length="262" mass="28971">MNILVVKTPEELAEAGYKLIEEVVKTKENPTLGMATGSSPLGIYAEMRKNKLDTSRVTTVNLDEYVNLPHEDKNSYHYFMQEQLFDHLPFKQTYVPNGMASDLEEECKRYEGILAANPVDLQILGIGENGHIGFNEPGTPFNSPTNIVELTESTRQANLRFFEKEEDVPTHAITMGIGSIMKAKQILLVAMGSKKAEAVKELLQGAYSEACPATVLQRHPNVTVIADQEALSLCSEAIADEHRQVFTISDLLSDSRVGETAN</sequence>
<evidence type="ECO:0000255" key="1">
    <source>
        <dbReference type="HAMAP-Rule" id="MF_01241"/>
    </source>
</evidence>
<dbReference type="EC" id="3.5.99.6" evidence="1"/>
<dbReference type="EMBL" id="CP000001">
    <property type="protein sequence ID" value="AAU16456.1"/>
    <property type="molecule type" value="Genomic_DNA"/>
</dbReference>
<dbReference type="RefSeq" id="WP_001024206.1">
    <property type="nucleotide sequence ID" value="NZ_CP009968.1"/>
</dbReference>
<dbReference type="SMR" id="Q635M6"/>
<dbReference type="GeneID" id="75087199"/>
<dbReference type="KEGG" id="bcz:BCE33L3810"/>
<dbReference type="PATRIC" id="fig|288681.22.peg.1593"/>
<dbReference type="UniPathway" id="UPA00629">
    <property type="reaction ID" value="UER00684"/>
</dbReference>
<dbReference type="Proteomes" id="UP000002612">
    <property type="component" value="Chromosome"/>
</dbReference>
<dbReference type="GO" id="GO:0005737">
    <property type="term" value="C:cytoplasm"/>
    <property type="evidence" value="ECO:0007669"/>
    <property type="project" value="TreeGrafter"/>
</dbReference>
<dbReference type="GO" id="GO:0004342">
    <property type="term" value="F:glucosamine-6-phosphate deaminase activity"/>
    <property type="evidence" value="ECO:0007669"/>
    <property type="project" value="UniProtKB-UniRule"/>
</dbReference>
<dbReference type="GO" id="GO:0042802">
    <property type="term" value="F:identical protein binding"/>
    <property type="evidence" value="ECO:0007669"/>
    <property type="project" value="TreeGrafter"/>
</dbReference>
<dbReference type="GO" id="GO:0005975">
    <property type="term" value="P:carbohydrate metabolic process"/>
    <property type="evidence" value="ECO:0007669"/>
    <property type="project" value="InterPro"/>
</dbReference>
<dbReference type="GO" id="GO:0006043">
    <property type="term" value="P:glucosamine catabolic process"/>
    <property type="evidence" value="ECO:0007669"/>
    <property type="project" value="TreeGrafter"/>
</dbReference>
<dbReference type="GO" id="GO:0006046">
    <property type="term" value="P:N-acetylglucosamine catabolic process"/>
    <property type="evidence" value="ECO:0007669"/>
    <property type="project" value="TreeGrafter"/>
</dbReference>
<dbReference type="GO" id="GO:0019262">
    <property type="term" value="P:N-acetylneuraminate catabolic process"/>
    <property type="evidence" value="ECO:0007669"/>
    <property type="project" value="UniProtKB-UniRule"/>
</dbReference>
<dbReference type="CDD" id="cd01399">
    <property type="entry name" value="GlcN6P_deaminase"/>
    <property type="match status" value="1"/>
</dbReference>
<dbReference type="FunFam" id="3.40.50.1360:FF:000003">
    <property type="entry name" value="Glucosamine-6-phosphate deaminase"/>
    <property type="match status" value="1"/>
</dbReference>
<dbReference type="Gene3D" id="3.40.50.1360">
    <property type="match status" value="1"/>
</dbReference>
<dbReference type="HAMAP" id="MF_01241">
    <property type="entry name" value="GlcN6P_deamin"/>
    <property type="match status" value="1"/>
</dbReference>
<dbReference type="InterPro" id="IPR006148">
    <property type="entry name" value="Glc/Gal-6P_isomerase"/>
</dbReference>
<dbReference type="InterPro" id="IPR004547">
    <property type="entry name" value="Glucosamine6P_isomerase"/>
</dbReference>
<dbReference type="InterPro" id="IPR018321">
    <property type="entry name" value="Glucosamine6P_isomerase_CS"/>
</dbReference>
<dbReference type="InterPro" id="IPR037171">
    <property type="entry name" value="NagB/RpiA_transferase-like"/>
</dbReference>
<dbReference type="NCBIfam" id="TIGR00502">
    <property type="entry name" value="nagB"/>
    <property type="match status" value="1"/>
</dbReference>
<dbReference type="NCBIfam" id="NF001682">
    <property type="entry name" value="PRK00443.1-1"/>
    <property type="match status" value="1"/>
</dbReference>
<dbReference type="PANTHER" id="PTHR11280">
    <property type="entry name" value="GLUCOSAMINE-6-PHOSPHATE ISOMERASE"/>
    <property type="match status" value="1"/>
</dbReference>
<dbReference type="PANTHER" id="PTHR11280:SF5">
    <property type="entry name" value="GLUCOSAMINE-6-PHOSPHATE ISOMERASE"/>
    <property type="match status" value="1"/>
</dbReference>
<dbReference type="Pfam" id="PF01182">
    <property type="entry name" value="Glucosamine_iso"/>
    <property type="match status" value="1"/>
</dbReference>
<dbReference type="SUPFAM" id="SSF100950">
    <property type="entry name" value="NagB/RpiA/CoA transferase-like"/>
    <property type="match status" value="1"/>
</dbReference>
<dbReference type="PROSITE" id="PS01161">
    <property type="entry name" value="GLC_GALNAC_ISOMERASE"/>
    <property type="match status" value="1"/>
</dbReference>
<gene>
    <name evidence="1" type="primary">nagB</name>
    <name type="ordered locus">BCE33L3810</name>
</gene>
<protein>
    <recommendedName>
        <fullName evidence="1">Glucosamine-6-phosphate deaminase</fullName>
        <ecNumber evidence="1">3.5.99.6</ecNumber>
    </recommendedName>
    <alternativeName>
        <fullName evidence="1">GlcN6P deaminase</fullName>
        <shortName evidence="1">GNPDA</shortName>
    </alternativeName>
    <alternativeName>
        <fullName evidence="1">Glucosamine-6-phosphate isomerase</fullName>
    </alternativeName>
</protein>
<keyword id="KW-0119">Carbohydrate metabolism</keyword>
<keyword id="KW-0378">Hydrolase</keyword>
<proteinExistence type="inferred from homology"/>
<accession>Q635M6</accession>
<comment type="function">
    <text evidence="1">Catalyzes the reversible isomerization-deamination of glucosamine 6-phosphate (GlcN6P) to form fructose 6-phosphate (Fru6P) and ammonium ion.</text>
</comment>
<comment type="catalytic activity">
    <reaction evidence="1">
        <text>alpha-D-glucosamine 6-phosphate + H2O = beta-D-fructose 6-phosphate + NH4(+)</text>
        <dbReference type="Rhea" id="RHEA:12172"/>
        <dbReference type="ChEBI" id="CHEBI:15377"/>
        <dbReference type="ChEBI" id="CHEBI:28938"/>
        <dbReference type="ChEBI" id="CHEBI:57634"/>
        <dbReference type="ChEBI" id="CHEBI:75989"/>
        <dbReference type="EC" id="3.5.99.6"/>
    </reaction>
</comment>
<comment type="pathway">
    <text evidence="1">Amino-sugar metabolism; N-acetylneuraminate degradation; D-fructose 6-phosphate from N-acetylneuraminate: step 5/5.</text>
</comment>
<comment type="similarity">
    <text evidence="1">Belongs to the glucosamine/galactosamine-6-phosphate isomerase family. NagB subfamily.</text>
</comment>
<name>NAGB_BACCZ</name>
<organism>
    <name type="scientific">Bacillus cereus (strain ZK / E33L)</name>
    <dbReference type="NCBI Taxonomy" id="288681"/>
    <lineage>
        <taxon>Bacteria</taxon>
        <taxon>Bacillati</taxon>
        <taxon>Bacillota</taxon>
        <taxon>Bacilli</taxon>
        <taxon>Bacillales</taxon>
        <taxon>Bacillaceae</taxon>
        <taxon>Bacillus</taxon>
        <taxon>Bacillus cereus group</taxon>
    </lineage>
</organism>